<evidence type="ECO:0000250" key="1">
    <source>
        <dbReference type="UniProtKB" id="P00423"/>
    </source>
</evidence>
<evidence type="ECO:0000250" key="2">
    <source>
        <dbReference type="UniProtKB" id="P00424"/>
    </source>
</evidence>
<evidence type="ECO:0000250" key="3">
    <source>
        <dbReference type="UniProtKB" id="P10888"/>
    </source>
</evidence>
<evidence type="ECO:0000250" key="4">
    <source>
        <dbReference type="UniProtKB" id="P13073"/>
    </source>
</evidence>
<evidence type="ECO:0000250" key="5">
    <source>
        <dbReference type="UniProtKB" id="P19783"/>
    </source>
</evidence>
<evidence type="ECO:0000305" key="6"/>
<reference key="1">
    <citation type="journal article" date="1997" name="J. Mol. Evol.">
        <title>Molecular evolution of cytochrome c oxidase subunit IV: evidence for positive selection in simian primates.</title>
        <authorList>
            <person name="Wu W."/>
            <person name="Goodman M."/>
            <person name="Lomax M.I."/>
            <person name="Grossman L.I."/>
        </authorList>
    </citation>
    <scope>NUCLEOTIDE SEQUENCE [GENOMIC DNA]</scope>
</reference>
<sequence length="144" mass="16827">SVVKSEDFSLSAYVDRRDHPLPEVAHVKHLSASQKALKEKEKASWSSLSMDEKVELYRIKFKESFAEMNRGSNEWKTVVGGAMFFIGFTALIIMWQKRHVYGPLPQSFDKEWVAKQTKRMLDMKVNPIQGLASKWDYEKNEWKK</sequence>
<organism>
    <name type="scientific">Pongo pygmaeus</name>
    <name type="common">Bornean orangutan</name>
    <dbReference type="NCBI Taxonomy" id="9600"/>
    <lineage>
        <taxon>Eukaryota</taxon>
        <taxon>Metazoa</taxon>
        <taxon>Chordata</taxon>
        <taxon>Craniata</taxon>
        <taxon>Vertebrata</taxon>
        <taxon>Euteleostomi</taxon>
        <taxon>Mammalia</taxon>
        <taxon>Eutheria</taxon>
        <taxon>Euarchontoglires</taxon>
        <taxon>Primates</taxon>
        <taxon>Haplorrhini</taxon>
        <taxon>Catarrhini</taxon>
        <taxon>Hominidae</taxon>
        <taxon>Pongo</taxon>
    </lineage>
</organism>
<protein>
    <recommendedName>
        <fullName>Cytochrome c oxidase subunit 4 isoform 1, mitochondrial</fullName>
    </recommendedName>
    <alternativeName>
        <fullName>Cytochrome c oxidase polypeptide IV</fullName>
    </alternativeName>
    <alternativeName>
        <fullName>Cytochrome c oxidase subunit IV isoform 1</fullName>
        <shortName>COX IV-1</shortName>
    </alternativeName>
</protein>
<accession>O46579</accession>
<gene>
    <name type="primary">COX4I1</name>
    <name type="synonym">COX4</name>
</gene>
<feature type="chain" id="PRO_0000194080" description="Cytochrome c oxidase subunit 4 isoform 1, mitochondrial">
    <location>
        <begin position="1" status="less than"/>
        <end position="144"/>
    </location>
</feature>
<feature type="topological domain" description="Mitochondrial matrix" evidence="1">
    <location>
        <begin position="1" status="less than"/>
        <end position="73"/>
    </location>
</feature>
<feature type="transmembrane region" description="Helical" evidence="1">
    <location>
        <begin position="74"/>
        <end position="99"/>
    </location>
</feature>
<feature type="topological domain" description="Mitochondrial intermembrane" evidence="1">
    <location>
        <begin position="100"/>
        <end position="144"/>
    </location>
</feature>
<feature type="modified residue" description="N6-acetyllysine; alternate" evidence="5">
    <location>
        <position position="4"/>
    </location>
</feature>
<feature type="modified residue" description="N6-succinyllysine; alternate" evidence="5">
    <location>
        <position position="4"/>
    </location>
</feature>
<feature type="modified residue" description="N6-acetyllysine" evidence="4">
    <location>
        <position position="28"/>
    </location>
</feature>
<feature type="modified residue" description="Phosphoserine" evidence="3">
    <location>
        <position position="31"/>
    </location>
</feature>
<feature type="modified residue" description="Phosphoserine" evidence="3">
    <location>
        <position position="33"/>
    </location>
</feature>
<feature type="modified residue" description="N6-acetyllysine; alternate" evidence="4">
    <location>
        <position position="35"/>
    </location>
</feature>
<feature type="modified residue" description="N6-succinyllysine; alternate" evidence="5">
    <location>
        <position position="35"/>
    </location>
</feature>
<feature type="modified residue" description="N6-acetyllysine" evidence="5">
    <location>
        <position position="42"/>
    </location>
</feature>
<feature type="non-terminal residue">
    <location>
        <position position="1"/>
    </location>
</feature>
<keyword id="KW-0007">Acetylation</keyword>
<keyword id="KW-0472">Membrane</keyword>
<keyword id="KW-0496">Mitochondrion</keyword>
<keyword id="KW-0999">Mitochondrion inner membrane</keyword>
<keyword id="KW-0597">Phosphoprotein</keyword>
<keyword id="KW-0812">Transmembrane</keyword>
<keyword id="KW-1133">Transmembrane helix</keyword>
<proteinExistence type="inferred from homology"/>
<comment type="function">
    <text evidence="2">Component of the cytochrome c oxidase, the last enzyme in the mitochondrial electron transport chain which drives oxidative phosphorylation. The respiratory chain contains 3 multisubunit complexes succinate dehydrogenase (complex II, CII), ubiquinol-cytochrome c oxidoreductase (cytochrome b-c1 complex, complex III, CIII) and cytochrome c oxidase (complex IV, CIV), that cooperate to transfer electrons derived from NADH and succinate to molecular oxygen, creating an electrochemical gradient over the inner membrane that drives transmembrane transport and the ATP synthase. Cytochrome c oxidase is the component of the respiratory chain that catalyzes the reduction of oxygen to water. Electrons originating from reduced cytochrome c in the intermembrane space (IMS) are transferred via the dinuclear copper A center (CU(A)) of subunit 2 and heme A of subunit 1 to the active site in subunit 1, a binuclear center (BNC) formed by heme A3 and copper B (CU(B)). The BNC reduces molecular oxygen to 2 water molecules using 4 electrons from cytochrome c in the IMS and 4 protons from the mitochondrial matrix.</text>
</comment>
<comment type="pathway">
    <text evidence="2">Energy metabolism; oxidative phosphorylation.</text>
</comment>
<comment type="subunit">
    <text evidence="1 3 4 5">Component of the cytochrome c oxidase (complex IV, CIV), a multisubunit enzyme composed of 14 subunits. The complex is composed of a catalytic core of 3 subunits MT-CO1, MT-CO2 and MT-CO3, encoded in the mitochondrial DNA, and 11 supernumerary subunits COX4I, COX5A, COX5B, COX6A, COX6B, COX6C, COX7A, COX7B, COX7C, COX8 and NDUFA4, which are encoded in the nuclear genome. The complex exists as a monomer or a dimer and forms supercomplexes (SCs) in the inner mitochondrial membrane with NADH-ubiquinone oxidoreductase (complex I, CI) and ubiquinol-cytochrome c oxidoreductase (cytochrome b-c1 complex, complex III, CIII), resulting in different assemblies (supercomplex SCI(1)III(2)IV(1) and megacomplex MCI(2)III(2)IV(2)) (By similarity). Interacts with PHB2; the interaction decreases in absence of SPHK2 (By similarity). Interacts with AFG1L (By similarity). Interacts with ABCB7; this interaction allows the regulation of cellular iron homeostasis and cellular reactive oxygen species (ROS) levels in cardiomyocytes (By similarity). Interacts with FLVCR2; this interaction occurs in the absence of heme and is disrupted upon heme binding. Interacts with IRGC (By similarity).</text>
</comment>
<comment type="subcellular location">
    <subcellularLocation>
        <location evidence="1">Mitochondrion inner membrane</location>
        <topology evidence="1">Single-pass membrane protein</topology>
    </subcellularLocation>
</comment>
<comment type="similarity">
    <text evidence="6">Belongs to the cytochrome c oxidase IV family.</text>
</comment>
<name>COX41_PONPY</name>
<dbReference type="EMBL" id="AH005840">
    <property type="protein sequence ID" value="AAB97848.1"/>
    <property type="molecule type" value="Genomic_DNA"/>
</dbReference>
<dbReference type="SMR" id="O46579"/>
<dbReference type="UniPathway" id="UPA00705"/>
<dbReference type="GO" id="GO:0005743">
    <property type="term" value="C:mitochondrial inner membrane"/>
    <property type="evidence" value="ECO:0000250"/>
    <property type="project" value="UniProtKB"/>
</dbReference>
<dbReference type="GO" id="GO:0045277">
    <property type="term" value="C:respiratory chain complex IV"/>
    <property type="evidence" value="ECO:0007669"/>
    <property type="project" value="InterPro"/>
</dbReference>
<dbReference type="GO" id="GO:0006123">
    <property type="term" value="P:mitochondrial electron transport, cytochrome c to oxygen"/>
    <property type="evidence" value="ECO:0007669"/>
    <property type="project" value="InterPro"/>
</dbReference>
<dbReference type="CDD" id="cd00922">
    <property type="entry name" value="Cyt_c_Oxidase_IV"/>
    <property type="match status" value="1"/>
</dbReference>
<dbReference type="FunFam" id="1.10.442.10:FF:000001">
    <property type="entry name" value="Cytochrome c oxidase subunit 4 isoform 1"/>
    <property type="match status" value="1"/>
</dbReference>
<dbReference type="Gene3D" id="1.10.442.10">
    <property type="entry name" value="Cytochrome c oxidase subunit IV"/>
    <property type="match status" value="1"/>
</dbReference>
<dbReference type="InterPro" id="IPR013288">
    <property type="entry name" value="Cyt_c_oxidase_su4"/>
</dbReference>
<dbReference type="InterPro" id="IPR004203">
    <property type="entry name" value="Cyt_c_oxidase_su4_fam"/>
</dbReference>
<dbReference type="InterPro" id="IPR036639">
    <property type="entry name" value="Cyt_c_oxidase_su4_sf"/>
</dbReference>
<dbReference type="PANTHER" id="PTHR10707:SF12">
    <property type="entry name" value="CYTOCHROME C OXIDASE SUBUNIT 4 ISOFORM 1, MITOCHONDRIAL"/>
    <property type="match status" value="1"/>
</dbReference>
<dbReference type="PANTHER" id="PTHR10707">
    <property type="entry name" value="CYTOCHROME C OXIDASE SUBUNIT IV"/>
    <property type="match status" value="1"/>
</dbReference>
<dbReference type="Pfam" id="PF02936">
    <property type="entry name" value="COX4"/>
    <property type="match status" value="1"/>
</dbReference>
<dbReference type="PRINTS" id="PR01873">
    <property type="entry name" value="CYTCOXIDASE4"/>
</dbReference>
<dbReference type="SUPFAM" id="SSF81406">
    <property type="entry name" value="Mitochondrial cytochrome c oxidase subunit IV"/>
    <property type="match status" value="1"/>
</dbReference>